<name>AZOR_ECOHS</name>
<comment type="function">
    <text evidence="1">Quinone reductase that provides resistance to thiol-specific stress caused by electrophilic quinones.</text>
</comment>
<comment type="function">
    <text evidence="1">Also exhibits azoreductase activity. Catalyzes the reductive cleavage of the azo bond in aromatic azo compounds to the corresponding amines.</text>
</comment>
<comment type="catalytic activity">
    <reaction evidence="1">
        <text>2 a quinone + NADH + H(+) = 2 a 1,4-benzosemiquinone + NAD(+)</text>
        <dbReference type="Rhea" id="RHEA:65952"/>
        <dbReference type="ChEBI" id="CHEBI:15378"/>
        <dbReference type="ChEBI" id="CHEBI:57540"/>
        <dbReference type="ChEBI" id="CHEBI:57945"/>
        <dbReference type="ChEBI" id="CHEBI:132124"/>
        <dbReference type="ChEBI" id="CHEBI:134225"/>
    </reaction>
</comment>
<comment type="catalytic activity">
    <reaction evidence="1">
        <text>N,N-dimethyl-1,4-phenylenediamine + anthranilate + 2 NAD(+) = 2-(4-dimethylaminophenyl)diazenylbenzoate + 2 NADH + 2 H(+)</text>
        <dbReference type="Rhea" id="RHEA:55872"/>
        <dbReference type="ChEBI" id="CHEBI:15378"/>
        <dbReference type="ChEBI" id="CHEBI:15783"/>
        <dbReference type="ChEBI" id="CHEBI:16567"/>
        <dbReference type="ChEBI" id="CHEBI:57540"/>
        <dbReference type="ChEBI" id="CHEBI:57945"/>
        <dbReference type="ChEBI" id="CHEBI:71579"/>
        <dbReference type="EC" id="1.7.1.17"/>
    </reaction>
</comment>
<comment type="cofactor">
    <cofactor evidence="1">
        <name>FMN</name>
        <dbReference type="ChEBI" id="CHEBI:58210"/>
    </cofactor>
    <text evidence="1">Binds 1 FMN per subunit.</text>
</comment>
<comment type="subunit">
    <text evidence="1">Homodimer.</text>
</comment>
<comment type="similarity">
    <text evidence="1">Belongs to the azoreductase type 1 family.</text>
</comment>
<keyword id="KW-0285">Flavoprotein</keyword>
<keyword id="KW-0288">FMN</keyword>
<keyword id="KW-0520">NAD</keyword>
<keyword id="KW-0560">Oxidoreductase</keyword>
<organism>
    <name type="scientific">Escherichia coli O9:H4 (strain HS)</name>
    <dbReference type="NCBI Taxonomy" id="331112"/>
    <lineage>
        <taxon>Bacteria</taxon>
        <taxon>Pseudomonadati</taxon>
        <taxon>Pseudomonadota</taxon>
        <taxon>Gammaproteobacteria</taxon>
        <taxon>Enterobacterales</taxon>
        <taxon>Enterobacteriaceae</taxon>
        <taxon>Escherichia</taxon>
    </lineage>
</organism>
<feature type="chain" id="PRO_1000066504" description="FMN-dependent NADH:quinone oxidoreductase">
    <location>
        <begin position="1"/>
        <end position="201"/>
    </location>
</feature>
<feature type="binding site" evidence="1">
    <location>
        <position position="10"/>
    </location>
    <ligand>
        <name>FMN</name>
        <dbReference type="ChEBI" id="CHEBI:58210"/>
    </ligand>
</feature>
<feature type="binding site" evidence="1">
    <location>
        <begin position="16"/>
        <end position="18"/>
    </location>
    <ligand>
        <name>FMN</name>
        <dbReference type="ChEBI" id="CHEBI:58210"/>
    </ligand>
</feature>
<feature type="binding site" evidence="1">
    <location>
        <begin position="96"/>
        <end position="99"/>
    </location>
    <ligand>
        <name>FMN</name>
        <dbReference type="ChEBI" id="CHEBI:58210"/>
    </ligand>
</feature>
<feature type="binding site" evidence="1">
    <location>
        <begin position="140"/>
        <end position="143"/>
    </location>
    <ligand>
        <name>FMN</name>
        <dbReference type="ChEBI" id="CHEBI:58210"/>
    </ligand>
</feature>
<evidence type="ECO:0000255" key="1">
    <source>
        <dbReference type="HAMAP-Rule" id="MF_01216"/>
    </source>
</evidence>
<accession>A7ZZX1</accession>
<protein>
    <recommendedName>
        <fullName evidence="1">FMN-dependent NADH:quinone oxidoreductase</fullName>
        <ecNumber evidence="1">1.6.5.-</ecNumber>
    </recommendedName>
    <alternativeName>
        <fullName evidence="1">Azo-dye reductase</fullName>
    </alternativeName>
    <alternativeName>
        <fullName evidence="1">FMN-dependent NADH-azo compound oxidoreductase</fullName>
    </alternativeName>
    <alternativeName>
        <fullName evidence="1">FMN-dependent NADH-azoreductase</fullName>
        <ecNumber evidence="1">1.7.1.17</ecNumber>
    </alternativeName>
</protein>
<gene>
    <name evidence="1" type="primary">azoR</name>
    <name type="ordered locus">EcHS_A1495</name>
</gene>
<reference key="1">
    <citation type="journal article" date="2008" name="J. Bacteriol.">
        <title>The pangenome structure of Escherichia coli: comparative genomic analysis of E. coli commensal and pathogenic isolates.</title>
        <authorList>
            <person name="Rasko D.A."/>
            <person name="Rosovitz M.J."/>
            <person name="Myers G.S.A."/>
            <person name="Mongodin E.F."/>
            <person name="Fricke W.F."/>
            <person name="Gajer P."/>
            <person name="Crabtree J."/>
            <person name="Sebaihia M."/>
            <person name="Thomson N.R."/>
            <person name="Chaudhuri R."/>
            <person name="Henderson I.R."/>
            <person name="Sperandio V."/>
            <person name="Ravel J."/>
        </authorList>
    </citation>
    <scope>NUCLEOTIDE SEQUENCE [LARGE SCALE GENOMIC DNA]</scope>
    <source>
        <strain>HS</strain>
    </source>
</reference>
<sequence length="201" mass="21658">MSKVLVLKSSILAGYSQSNQLSDYFVEQWREKHSADEITVRDLAANPIPVLDGELVGALRPSDAPLTPRQQEALALSDELIAELKAHDVIVIAAPMYNFNISTQLKNYFDLVARAGVTFRYTENGPEGLVTGKKAIVITSRGGIHKDGPTDLVTPYLSTFLGFIGITDVKFVFAEGIAYGPEMAAKAQSDAKAAIDSIVSA</sequence>
<proteinExistence type="inferred from homology"/>
<dbReference type="EC" id="1.6.5.-" evidence="1"/>
<dbReference type="EC" id="1.7.1.17" evidence="1"/>
<dbReference type="EMBL" id="CP000802">
    <property type="protein sequence ID" value="ABV05825.1"/>
    <property type="molecule type" value="Genomic_DNA"/>
</dbReference>
<dbReference type="RefSeq" id="WP_000048950.1">
    <property type="nucleotide sequence ID" value="NC_009800.1"/>
</dbReference>
<dbReference type="SMR" id="A7ZZX1"/>
<dbReference type="KEGG" id="ecx:EcHS_A1495"/>
<dbReference type="HOGENOM" id="CLU_088964_0_0_6"/>
<dbReference type="GO" id="GO:0009055">
    <property type="term" value="F:electron transfer activity"/>
    <property type="evidence" value="ECO:0007669"/>
    <property type="project" value="UniProtKB-UniRule"/>
</dbReference>
<dbReference type="GO" id="GO:0010181">
    <property type="term" value="F:FMN binding"/>
    <property type="evidence" value="ECO:0007669"/>
    <property type="project" value="UniProtKB-UniRule"/>
</dbReference>
<dbReference type="GO" id="GO:0016652">
    <property type="term" value="F:oxidoreductase activity, acting on NAD(P)H as acceptor"/>
    <property type="evidence" value="ECO:0007669"/>
    <property type="project" value="UniProtKB-UniRule"/>
</dbReference>
<dbReference type="GO" id="GO:0016655">
    <property type="term" value="F:oxidoreductase activity, acting on NAD(P)H, quinone or similar compound as acceptor"/>
    <property type="evidence" value="ECO:0007669"/>
    <property type="project" value="InterPro"/>
</dbReference>
<dbReference type="FunFam" id="3.40.50.360:FF:000010">
    <property type="entry name" value="FMN-dependent NADH-azoreductase"/>
    <property type="match status" value="1"/>
</dbReference>
<dbReference type="Gene3D" id="3.40.50.360">
    <property type="match status" value="1"/>
</dbReference>
<dbReference type="HAMAP" id="MF_01216">
    <property type="entry name" value="Azoreductase_type1"/>
    <property type="match status" value="1"/>
</dbReference>
<dbReference type="InterPro" id="IPR003680">
    <property type="entry name" value="Flavodoxin_fold"/>
</dbReference>
<dbReference type="InterPro" id="IPR029039">
    <property type="entry name" value="Flavoprotein-like_sf"/>
</dbReference>
<dbReference type="InterPro" id="IPR050104">
    <property type="entry name" value="FMN-dep_NADH:Q_OxRdtase_AzoR1"/>
</dbReference>
<dbReference type="InterPro" id="IPR023048">
    <property type="entry name" value="NADH:quinone_OxRdtase_FMN_depd"/>
</dbReference>
<dbReference type="PANTHER" id="PTHR43741">
    <property type="entry name" value="FMN-DEPENDENT NADH-AZOREDUCTASE 1"/>
    <property type="match status" value="1"/>
</dbReference>
<dbReference type="PANTHER" id="PTHR43741:SF2">
    <property type="entry name" value="FMN-DEPENDENT NADH:QUINONE OXIDOREDUCTASE"/>
    <property type="match status" value="1"/>
</dbReference>
<dbReference type="Pfam" id="PF02525">
    <property type="entry name" value="Flavodoxin_2"/>
    <property type="match status" value="1"/>
</dbReference>
<dbReference type="SUPFAM" id="SSF52218">
    <property type="entry name" value="Flavoproteins"/>
    <property type="match status" value="1"/>
</dbReference>